<sequence>MPRAVAGPEIERLIQLIARLPGLGPRSARRVALHLIKKREALMAPLAAAMTDALGKIVECRRCGNVDVCDPCTICTDTSRDRRTLVVVADVGDLWALERAGVLNAPYHVLGGVLSPLDGVGPEDLNLAKLVTRVHEDEVGEVILALGATVDGQTTAHYITDLLREAHVRVTRLAQGVPVGGELDYLDEGTLSAAIRARTQM</sequence>
<evidence type="ECO:0000255" key="1">
    <source>
        <dbReference type="HAMAP-Rule" id="MF_00017"/>
    </source>
</evidence>
<keyword id="KW-0227">DNA damage</keyword>
<keyword id="KW-0233">DNA recombination</keyword>
<keyword id="KW-0234">DNA repair</keyword>
<keyword id="KW-0479">Metal-binding</keyword>
<keyword id="KW-1185">Reference proteome</keyword>
<keyword id="KW-0862">Zinc</keyword>
<keyword id="KW-0863">Zinc-finger</keyword>
<gene>
    <name evidence="1" type="primary">recR</name>
    <name type="ordered locus">Xaut_1839</name>
</gene>
<organism>
    <name type="scientific">Xanthobacter autotrophicus (strain ATCC BAA-1158 / Py2)</name>
    <dbReference type="NCBI Taxonomy" id="78245"/>
    <lineage>
        <taxon>Bacteria</taxon>
        <taxon>Pseudomonadati</taxon>
        <taxon>Pseudomonadota</taxon>
        <taxon>Alphaproteobacteria</taxon>
        <taxon>Hyphomicrobiales</taxon>
        <taxon>Xanthobacteraceae</taxon>
        <taxon>Xanthobacter</taxon>
    </lineage>
</organism>
<name>RECR_XANP2</name>
<proteinExistence type="inferred from homology"/>
<protein>
    <recommendedName>
        <fullName evidence="1">Recombination protein RecR</fullName>
    </recommendedName>
</protein>
<feature type="chain" id="PRO_1000089781" description="Recombination protein RecR">
    <location>
        <begin position="1"/>
        <end position="201"/>
    </location>
</feature>
<feature type="domain" description="Toprim" evidence="1">
    <location>
        <begin position="83"/>
        <end position="178"/>
    </location>
</feature>
<feature type="zinc finger region" description="C4-type" evidence="1">
    <location>
        <begin position="60"/>
        <end position="75"/>
    </location>
</feature>
<reference key="1">
    <citation type="submission" date="2007-07" db="EMBL/GenBank/DDBJ databases">
        <title>Complete sequence of chromosome of Xanthobacter autotrophicus Py2.</title>
        <authorList>
            <consortium name="US DOE Joint Genome Institute"/>
            <person name="Copeland A."/>
            <person name="Lucas S."/>
            <person name="Lapidus A."/>
            <person name="Barry K."/>
            <person name="Glavina del Rio T."/>
            <person name="Hammon N."/>
            <person name="Israni S."/>
            <person name="Dalin E."/>
            <person name="Tice H."/>
            <person name="Pitluck S."/>
            <person name="Sims D."/>
            <person name="Brettin T."/>
            <person name="Bruce D."/>
            <person name="Detter J.C."/>
            <person name="Han C."/>
            <person name="Tapia R."/>
            <person name="Brainard J."/>
            <person name="Schmutz J."/>
            <person name="Larimer F."/>
            <person name="Land M."/>
            <person name="Hauser L."/>
            <person name="Kyrpides N."/>
            <person name="Kim E."/>
            <person name="Ensigns S.A."/>
            <person name="Richardson P."/>
        </authorList>
    </citation>
    <scope>NUCLEOTIDE SEQUENCE [LARGE SCALE GENOMIC DNA]</scope>
    <source>
        <strain>ATCC BAA-1158 / Py2</strain>
    </source>
</reference>
<comment type="function">
    <text evidence="1">May play a role in DNA repair. It seems to be involved in an RecBC-independent recombinational process of DNA repair. It may act with RecF and RecO.</text>
</comment>
<comment type="similarity">
    <text evidence="1">Belongs to the RecR family.</text>
</comment>
<dbReference type="EMBL" id="CP000781">
    <property type="protein sequence ID" value="ABS67084.1"/>
    <property type="molecule type" value="Genomic_DNA"/>
</dbReference>
<dbReference type="SMR" id="A7IGE1"/>
<dbReference type="STRING" id="78245.Xaut_1839"/>
<dbReference type="KEGG" id="xau:Xaut_1839"/>
<dbReference type="eggNOG" id="COG0353">
    <property type="taxonomic scope" value="Bacteria"/>
</dbReference>
<dbReference type="HOGENOM" id="CLU_060739_1_1_5"/>
<dbReference type="OrthoDB" id="9802672at2"/>
<dbReference type="PhylomeDB" id="A7IGE1"/>
<dbReference type="Proteomes" id="UP000002417">
    <property type="component" value="Chromosome"/>
</dbReference>
<dbReference type="GO" id="GO:0003677">
    <property type="term" value="F:DNA binding"/>
    <property type="evidence" value="ECO:0007669"/>
    <property type="project" value="UniProtKB-UniRule"/>
</dbReference>
<dbReference type="GO" id="GO:0008270">
    <property type="term" value="F:zinc ion binding"/>
    <property type="evidence" value="ECO:0007669"/>
    <property type="project" value="UniProtKB-KW"/>
</dbReference>
<dbReference type="GO" id="GO:0006310">
    <property type="term" value="P:DNA recombination"/>
    <property type="evidence" value="ECO:0007669"/>
    <property type="project" value="UniProtKB-UniRule"/>
</dbReference>
<dbReference type="GO" id="GO:0006281">
    <property type="term" value="P:DNA repair"/>
    <property type="evidence" value="ECO:0007669"/>
    <property type="project" value="UniProtKB-UniRule"/>
</dbReference>
<dbReference type="CDD" id="cd01025">
    <property type="entry name" value="TOPRIM_recR"/>
    <property type="match status" value="1"/>
</dbReference>
<dbReference type="Gene3D" id="3.40.1360.10">
    <property type="match status" value="1"/>
</dbReference>
<dbReference type="Gene3D" id="6.10.250.240">
    <property type="match status" value="1"/>
</dbReference>
<dbReference type="Gene3D" id="1.10.8.420">
    <property type="entry name" value="RecR Domain 1"/>
    <property type="match status" value="1"/>
</dbReference>
<dbReference type="HAMAP" id="MF_00017">
    <property type="entry name" value="RecR"/>
    <property type="match status" value="1"/>
</dbReference>
<dbReference type="InterPro" id="IPR000093">
    <property type="entry name" value="DNA_Rcmb_RecR"/>
</dbReference>
<dbReference type="InterPro" id="IPR023627">
    <property type="entry name" value="Rcmb_RecR"/>
</dbReference>
<dbReference type="InterPro" id="IPR015967">
    <property type="entry name" value="Rcmb_RecR_Znf"/>
</dbReference>
<dbReference type="InterPro" id="IPR006171">
    <property type="entry name" value="TOPRIM_dom"/>
</dbReference>
<dbReference type="InterPro" id="IPR034137">
    <property type="entry name" value="TOPRIM_RecR"/>
</dbReference>
<dbReference type="NCBIfam" id="TIGR00615">
    <property type="entry name" value="recR"/>
    <property type="match status" value="1"/>
</dbReference>
<dbReference type="PANTHER" id="PTHR30446">
    <property type="entry name" value="RECOMBINATION PROTEIN RECR"/>
    <property type="match status" value="1"/>
</dbReference>
<dbReference type="PANTHER" id="PTHR30446:SF0">
    <property type="entry name" value="RECOMBINATION PROTEIN RECR"/>
    <property type="match status" value="1"/>
</dbReference>
<dbReference type="Pfam" id="PF21175">
    <property type="entry name" value="RecR_C"/>
    <property type="match status" value="1"/>
</dbReference>
<dbReference type="Pfam" id="PF21176">
    <property type="entry name" value="RecR_HhH"/>
    <property type="match status" value="1"/>
</dbReference>
<dbReference type="Pfam" id="PF13662">
    <property type="entry name" value="Toprim_4"/>
    <property type="match status" value="1"/>
</dbReference>
<dbReference type="SUPFAM" id="SSF111304">
    <property type="entry name" value="Recombination protein RecR"/>
    <property type="match status" value="1"/>
</dbReference>
<dbReference type="PROSITE" id="PS01300">
    <property type="entry name" value="RECR"/>
    <property type="match status" value="1"/>
</dbReference>
<dbReference type="PROSITE" id="PS50880">
    <property type="entry name" value="TOPRIM"/>
    <property type="match status" value="1"/>
</dbReference>
<accession>A7IGE1</accession>